<proteinExistence type="inferred from homology"/>
<name>HLDD_CROS8</name>
<gene>
    <name evidence="1" type="primary">hldD</name>
    <name type="ordered locus">ESA_04109</name>
</gene>
<keyword id="KW-0119">Carbohydrate metabolism</keyword>
<keyword id="KW-0413">Isomerase</keyword>
<keyword id="KW-0521">NADP</keyword>
<keyword id="KW-1185">Reference proteome</keyword>
<protein>
    <recommendedName>
        <fullName evidence="1">ADP-L-glycero-D-manno-heptose-6-epimerase</fullName>
        <ecNumber evidence="1">5.1.3.20</ecNumber>
    </recommendedName>
    <alternativeName>
        <fullName evidence="1">ADP-L-glycero-beta-D-manno-heptose-6-epimerase</fullName>
        <shortName evidence="1">ADP-glyceromanno-heptose 6-epimerase</shortName>
        <shortName evidence="1">ADP-hep 6-epimerase</shortName>
        <shortName evidence="1">AGME</shortName>
    </alternativeName>
</protein>
<dbReference type="EC" id="5.1.3.20" evidence="1"/>
<dbReference type="EMBL" id="CP000783">
    <property type="protein sequence ID" value="ABU79290.1"/>
    <property type="molecule type" value="Genomic_DNA"/>
</dbReference>
<dbReference type="SMR" id="A7MQ91"/>
<dbReference type="KEGG" id="esa:ESA_04109"/>
<dbReference type="HOGENOM" id="CLU_007383_1_3_6"/>
<dbReference type="UniPathway" id="UPA00356">
    <property type="reaction ID" value="UER00440"/>
</dbReference>
<dbReference type="Proteomes" id="UP000000260">
    <property type="component" value="Chromosome"/>
</dbReference>
<dbReference type="GO" id="GO:0008712">
    <property type="term" value="F:ADP-glyceromanno-heptose 6-epimerase activity"/>
    <property type="evidence" value="ECO:0007669"/>
    <property type="project" value="UniProtKB-UniRule"/>
</dbReference>
<dbReference type="GO" id="GO:0050661">
    <property type="term" value="F:NADP binding"/>
    <property type="evidence" value="ECO:0007669"/>
    <property type="project" value="InterPro"/>
</dbReference>
<dbReference type="GO" id="GO:0097171">
    <property type="term" value="P:ADP-L-glycero-beta-D-manno-heptose biosynthetic process"/>
    <property type="evidence" value="ECO:0007669"/>
    <property type="project" value="UniProtKB-UniPathway"/>
</dbReference>
<dbReference type="GO" id="GO:0005975">
    <property type="term" value="P:carbohydrate metabolic process"/>
    <property type="evidence" value="ECO:0007669"/>
    <property type="project" value="UniProtKB-UniRule"/>
</dbReference>
<dbReference type="CDD" id="cd05248">
    <property type="entry name" value="ADP_GME_SDR_e"/>
    <property type="match status" value="1"/>
</dbReference>
<dbReference type="Gene3D" id="3.40.50.720">
    <property type="entry name" value="NAD(P)-binding Rossmann-like Domain"/>
    <property type="match status" value="1"/>
</dbReference>
<dbReference type="Gene3D" id="3.90.25.10">
    <property type="entry name" value="UDP-galactose 4-epimerase, domain 1"/>
    <property type="match status" value="1"/>
</dbReference>
<dbReference type="HAMAP" id="MF_01601">
    <property type="entry name" value="Heptose_epimerase"/>
    <property type="match status" value="1"/>
</dbReference>
<dbReference type="InterPro" id="IPR001509">
    <property type="entry name" value="Epimerase_deHydtase"/>
</dbReference>
<dbReference type="InterPro" id="IPR011912">
    <property type="entry name" value="Heptose_epim"/>
</dbReference>
<dbReference type="InterPro" id="IPR036291">
    <property type="entry name" value="NAD(P)-bd_dom_sf"/>
</dbReference>
<dbReference type="NCBIfam" id="TIGR02197">
    <property type="entry name" value="heptose_epim"/>
    <property type="match status" value="1"/>
</dbReference>
<dbReference type="NCBIfam" id="NF008360">
    <property type="entry name" value="PRK11150.1"/>
    <property type="match status" value="1"/>
</dbReference>
<dbReference type="PANTHER" id="PTHR43103:SF3">
    <property type="entry name" value="ADP-L-GLYCERO-D-MANNO-HEPTOSE-6-EPIMERASE"/>
    <property type="match status" value="1"/>
</dbReference>
<dbReference type="PANTHER" id="PTHR43103">
    <property type="entry name" value="NUCLEOSIDE-DIPHOSPHATE-SUGAR EPIMERASE"/>
    <property type="match status" value="1"/>
</dbReference>
<dbReference type="Pfam" id="PF01370">
    <property type="entry name" value="Epimerase"/>
    <property type="match status" value="1"/>
</dbReference>
<dbReference type="SUPFAM" id="SSF51735">
    <property type="entry name" value="NAD(P)-binding Rossmann-fold domains"/>
    <property type="match status" value="1"/>
</dbReference>
<reference key="1">
    <citation type="journal article" date="2010" name="PLoS ONE">
        <title>Genome sequence of Cronobacter sakazakii BAA-894 and comparative genomic hybridization analysis with other Cronobacter species.</title>
        <authorList>
            <person name="Kucerova E."/>
            <person name="Clifton S.W."/>
            <person name="Xia X.Q."/>
            <person name="Long F."/>
            <person name="Porwollik S."/>
            <person name="Fulton L."/>
            <person name="Fronick C."/>
            <person name="Minx P."/>
            <person name="Kyung K."/>
            <person name="Warren W."/>
            <person name="Fulton R."/>
            <person name="Feng D."/>
            <person name="Wollam A."/>
            <person name="Shah N."/>
            <person name="Bhonagiri V."/>
            <person name="Nash W.E."/>
            <person name="Hallsworth-Pepin K."/>
            <person name="Wilson R.K."/>
            <person name="McClelland M."/>
            <person name="Forsythe S.J."/>
        </authorList>
    </citation>
    <scope>NUCLEOTIDE SEQUENCE [LARGE SCALE GENOMIC DNA]</scope>
    <source>
        <strain>ATCC BAA-894</strain>
    </source>
</reference>
<organism>
    <name type="scientific">Cronobacter sakazakii (strain ATCC BAA-894)</name>
    <name type="common">Enterobacter sakazakii</name>
    <dbReference type="NCBI Taxonomy" id="290339"/>
    <lineage>
        <taxon>Bacteria</taxon>
        <taxon>Pseudomonadati</taxon>
        <taxon>Pseudomonadota</taxon>
        <taxon>Gammaproteobacteria</taxon>
        <taxon>Enterobacterales</taxon>
        <taxon>Enterobacteriaceae</taxon>
        <taxon>Cronobacter</taxon>
    </lineage>
</organism>
<accession>A7MQ91</accession>
<feature type="chain" id="PRO_1000069357" description="ADP-L-glycero-D-manno-heptose-6-epimerase">
    <location>
        <begin position="1"/>
        <end position="310"/>
    </location>
</feature>
<feature type="active site" description="Proton acceptor" evidence="1">
    <location>
        <position position="140"/>
    </location>
</feature>
<feature type="active site" description="Proton acceptor" evidence="1">
    <location>
        <position position="178"/>
    </location>
</feature>
<feature type="binding site" evidence="1">
    <location>
        <begin position="10"/>
        <end position="11"/>
    </location>
    <ligand>
        <name>NADP(+)</name>
        <dbReference type="ChEBI" id="CHEBI:58349"/>
    </ligand>
</feature>
<feature type="binding site" evidence="1">
    <location>
        <begin position="31"/>
        <end position="32"/>
    </location>
    <ligand>
        <name>NADP(+)</name>
        <dbReference type="ChEBI" id="CHEBI:58349"/>
    </ligand>
</feature>
<feature type="binding site" evidence="1">
    <location>
        <position position="38"/>
    </location>
    <ligand>
        <name>NADP(+)</name>
        <dbReference type="ChEBI" id="CHEBI:58349"/>
    </ligand>
</feature>
<feature type="binding site" evidence="1">
    <location>
        <position position="53"/>
    </location>
    <ligand>
        <name>NADP(+)</name>
        <dbReference type="ChEBI" id="CHEBI:58349"/>
    </ligand>
</feature>
<feature type="binding site" evidence="1">
    <location>
        <begin position="75"/>
        <end position="79"/>
    </location>
    <ligand>
        <name>NADP(+)</name>
        <dbReference type="ChEBI" id="CHEBI:58349"/>
    </ligand>
</feature>
<feature type="binding site" evidence="1">
    <location>
        <position position="92"/>
    </location>
    <ligand>
        <name>NADP(+)</name>
        <dbReference type="ChEBI" id="CHEBI:58349"/>
    </ligand>
</feature>
<feature type="binding site" evidence="1">
    <location>
        <position position="144"/>
    </location>
    <ligand>
        <name>NADP(+)</name>
        <dbReference type="ChEBI" id="CHEBI:58349"/>
    </ligand>
</feature>
<feature type="binding site" evidence="1">
    <location>
        <position position="169"/>
    </location>
    <ligand>
        <name>substrate</name>
    </ligand>
</feature>
<feature type="binding site" evidence="1">
    <location>
        <position position="170"/>
    </location>
    <ligand>
        <name>NADP(+)</name>
        <dbReference type="ChEBI" id="CHEBI:58349"/>
    </ligand>
</feature>
<feature type="binding site" evidence="1">
    <location>
        <position position="178"/>
    </location>
    <ligand>
        <name>NADP(+)</name>
        <dbReference type="ChEBI" id="CHEBI:58349"/>
    </ligand>
</feature>
<feature type="binding site" evidence="1">
    <location>
        <position position="180"/>
    </location>
    <ligand>
        <name>substrate</name>
    </ligand>
</feature>
<feature type="binding site" evidence="1">
    <location>
        <position position="187"/>
    </location>
    <ligand>
        <name>substrate</name>
    </ligand>
</feature>
<feature type="binding site" evidence="1">
    <location>
        <begin position="201"/>
        <end position="204"/>
    </location>
    <ligand>
        <name>substrate</name>
    </ligand>
</feature>
<feature type="binding site" evidence="1">
    <location>
        <position position="209"/>
    </location>
    <ligand>
        <name>substrate</name>
    </ligand>
</feature>
<feature type="binding site" evidence="1">
    <location>
        <position position="272"/>
    </location>
    <ligand>
        <name>substrate</name>
    </ligand>
</feature>
<comment type="function">
    <text evidence="1">Catalyzes the interconversion between ADP-D-glycero-beta-D-manno-heptose and ADP-L-glycero-beta-D-manno-heptose via an epimerization at carbon 6 of the heptose.</text>
</comment>
<comment type="catalytic activity">
    <reaction evidence="1">
        <text>ADP-D-glycero-beta-D-manno-heptose = ADP-L-glycero-beta-D-manno-heptose</text>
        <dbReference type="Rhea" id="RHEA:17577"/>
        <dbReference type="ChEBI" id="CHEBI:59967"/>
        <dbReference type="ChEBI" id="CHEBI:61506"/>
        <dbReference type="EC" id="5.1.3.20"/>
    </reaction>
</comment>
<comment type="cofactor">
    <cofactor evidence="1">
        <name>NADP(+)</name>
        <dbReference type="ChEBI" id="CHEBI:58349"/>
    </cofactor>
    <text evidence="1">Binds 1 NADP(+) per subunit.</text>
</comment>
<comment type="pathway">
    <text evidence="1">Nucleotide-sugar biosynthesis; ADP-L-glycero-beta-D-manno-heptose biosynthesis; ADP-L-glycero-beta-D-manno-heptose from D-glycero-beta-D-manno-heptose 7-phosphate: step 4/4.</text>
</comment>
<comment type="subunit">
    <text evidence="1">Homopentamer.</text>
</comment>
<comment type="domain">
    <text evidence="1">Contains a large N-terminal NADP-binding domain, and a smaller C-terminal substrate-binding domain.</text>
</comment>
<comment type="similarity">
    <text evidence="1">Belongs to the NAD(P)-dependent epimerase/dehydratase family. HldD subfamily.</text>
</comment>
<evidence type="ECO:0000255" key="1">
    <source>
        <dbReference type="HAMAP-Rule" id="MF_01601"/>
    </source>
</evidence>
<sequence>MIIVTGGAGFIGSNIVKALNDIGYTDILVVDNLKDGTKFVNLVDLNIADYMDKEDFQVQIMSGEEFGEVEAVFHEGACSSTTEWDGKYMMDNNYQYSKELLHYCLEREIPFLYASSAATYGGRTSDFIESREYEKPLNVYGYSKFLFDEYVRQILPEANSQITGFRYFNVYGPREGHKGSMASVAFHLNTQLNNGESPKLFEGSENFKRDFIYVGDVAAVNLWFWQNGVSGIFNCGTGRAESFQAVADAALAFHKKGSIEYIPFPEKLKGRYQAFTQADLTNLRAAGYDKPFKTVAEGVAEYMAWLNRDA</sequence>